<gene>
    <name type="ordered locus">ETA_15380</name>
</gene>
<feature type="chain" id="PRO_0000375288" description="YcgL domain-containing protein ETA_15380">
    <location>
        <begin position="1"/>
        <end position="91"/>
    </location>
</feature>
<feature type="domain" description="YcgL" evidence="1">
    <location>
        <begin position="1"/>
        <end position="85"/>
    </location>
</feature>
<name>Y1538_ERWT9</name>
<protein>
    <recommendedName>
        <fullName evidence="1">YcgL domain-containing protein ETA_15380</fullName>
    </recommendedName>
</protein>
<dbReference type="EMBL" id="CU468135">
    <property type="protein sequence ID" value="CAO96584.1"/>
    <property type="molecule type" value="Genomic_DNA"/>
</dbReference>
<dbReference type="RefSeq" id="WP_012441277.1">
    <property type="nucleotide sequence ID" value="NC_010694.1"/>
</dbReference>
<dbReference type="SMR" id="B2VJ45"/>
<dbReference type="STRING" id="465817.ETA_15380"/>
<dbReference type="KEGG" id="eta:ETA_15380"/>
<dbReference type="eggNOG" id="COG3100">
    <property type="taxonomic scope" value="Bacteria"/>
</dbReference>
<dbReference type="HOGENOM" id="CLU_155118_1_0_6"/>
<dbReference type="OrthoDB" id="7062382at2"/>
<dbReference type="Proteomes" id="UP000001726">
    <property type="component" value="Chromosome"/>
</dbReference>
<dbReference type="Gene3D" id="3.10.510.20">
    <property type="entry name" value="YcgL domain"/>
    <property type="match status" value="1"/>
</dbReference>
<dbReference type="HAMAP" id="MF_01866">
    <property type="entry name" value="UPF0745"/>
    <property type="match status" value="1"/>
</dbReference>
<dbReference type="InterPro" id="IPR038068">
    <property type="entry name" value="YcgL-like_sf"/>
</dbReference>
<dbReference type="InterPro" id="IPR027354">
    <property type="entry name" value="YcgL_dom"/>
</dbReference>
<dbReference type="PANTHER" id="PTHR38109">
    <property type="entry name" value="PROTEIN YCGL"/>
    <property type="match status" value="1"/>
</dbReference>
<dbReference type="PANTHER" id="PTHR38109:SF1">
    <property type="entry name" value="PROTEIN YCGL"/>
    <property type="match status" value="1"/>
</dbReference>
<dbReference type="Pfam" id="PF05166">
    <property type="entry name" value="YcgL"/>
    <property type="match status" value="1"/>
</dbReference>
<dbReference type="SUPFAM" id="SSF160191">
    <property type="entry name" value="YcgL-like"/>
    <property type="match status" value="1"/>
</dbReference>
<dbReference type="PROSITE" id="PS51648">
    <property type="entry name" value="YCGL"/>
    <property type="match status" value="1"/>
</dbReference>
<accession>B2VJ45</accession>
<organism>
    <name type="scientific">Erwinia tasmaniensis (strain DSM 17950 / CFBP 7177 / CIP 109463 / NCPPB 4357 / Et1/99)</name>
    <dbReference type="NCBI Taxonomy" id="465817"/>
    <lineage>
        <taxon>Bacteria</taxon>
        <taxon>Pseudomonadati</taxon>
        <taxon>Pseudomonadota</taxon>
        <taxon>Gammaproteobacteria</taxon>
        <taxon>Enterobacterales</taxon>
        <taxon>Erwiniaceae</taxon>
        <taxon>Erwinia</taxon>
    </lineage>
</organism>
<proteinExistence type="inferred from homology"/>
<keyword id="KW-1185">Reference proteome</keyword>
<reference key="1">
    <citation type="journal article" date="2008" name="Environ. Microbiol.">
        <title>The genome of Erwinia tasmaniensis strain Et1/99, a non-pathogenic bacterium in the genus Erwinia.</title>
        <authorList>
            <person name="Kube M."/>
            <person name="Migdoll A.M."/>
            <person name="Mueller I."/>
            <person name="Kuhl H."/>
            <person name="Beck A."/>
            <person name="Reinhardt R."/>
            <person name="Geider K."/>
        </authorList>
    </citation>
    <scope>NUCLEOTIDE SEQUENCE [LARGE SCALE GENOMIC DNA]</scope>
    <source>
        <strain>DSM 17950 / CFBP 7177 / CIP 109463 / NCPPB 4357 / Et1/99</strain>
    </source>
</reference>
<evidence type="ECO:0000255" key="1">
    <source>
        <dbReference type="HAMAP-Rule" id="MF_01866"/>
    </source>
</evidence>
<sequence length="91" mass="10349">MFCVIYRSPQRDQTYLYVEKKDDFSRVPEALLKGFGKPKLAMILPLDGSKKLVGADIKKVKTALREEGFYLQLPPPLESLLKIHLSDANKV</sequence>